<name>MHPD_ECO8A</name>
<gene>
    <name evidence="1" type="primary">mhpD</name>
    <name type="ordered locus">ECIAI1_0351</name>
</gene>
<keyword id="KW-0058">Aromatic hydrocarbons catabolism</keyword>
<keyword id="KW-0456">Lyase</keyword>
<organism>
    <name type="scientific">Escherichia coli O8 (strain IAI1)</name>
    <dbReference type="NCBI Taxonomy" id="585034"/>
    <lineage>
        <taxon>Bacteria</taxon>
        <taxon>Pseudomonadati</taxon>
        <taxon>Pseudomonadota</taxon>
        <taxon>Gammaproteobacteria</taxon>
        <taxon>Enterobacterales</taxon>
        <taxon>Enterobacteriaceae</taxon>
        <taxon>Escherichia</taxon>
    </lineage>
</organism>
<comment type="function">
    <text evidence="1">Catalyzes the conversion of 2-hydroxypentadienoic acid (enolic form of 2-oxopent-4-enoate) to 4-hydroxy-2-ketopentanoic acid.</text>
</comment>
<comment type="catalytic activity">
    <reaction evidence="1">
        <text>(S)-4-hydroxy-2-oxopentanoate = (2Z)-2-hydroxypenta-2,4-dienoate + H2O</text>
        <dbReference type="Rhea" id="RHEA:22580"/>
        <dbReference type="ChEBI" id="CHEBI:15377"/>
        <dbReference type="ChEBI" id="CHEBI:67152"/>
        <dbReference type="ChEBI" id="CHEBI:73143"/>
        <dbReference type="EC" id="4.2.1.80"/>
    </reaction>
</comment>
<comment type="cofactor">
    <cofactor evidence="1">
        <name>a divalent metal cation</name>
        <dbReference type="ChEBI" id="CHEBI:60240"/>
    </cofactor>
</comment>
<comment type="pathway">
    <text evidence="1">Aromatic compound metabolism; 3-phenylpropanoate degradation.</text>
</comment>
<comment type="similarity">
    <text evidence="1">Belongs to the hydratase/decarboxylase family. MhpD subfamily.</text>
</comment>
<reference key="1">
    <citation type="journal article" date="2009" name="PLoS Genet.">
        <title>Organised genome dynamics in the Escherichia coli species results in highly diverse adaptive paths.</title>
        <authorList>
            <person name="Touchon M."/>
            <person name="Hoede C."/>
            <person name="Tenaillon O."/>
            <person name="Barbe V."/>
            <person name="Baeriswyl S."/>
            <person name="Bidet P."/>
            <person name="Bingen E."/>
            <person name="Bonacorsi S."/>
            <person name="Bouchier C."/>
            <person name="Bouvet O."/>
            <person name="Calteau A."/>
            <person name="Chiapello H."/>
            <person name="Clermont O."/>
            <person name="Cruveiller S."/>
            <person name="Danchin A."/>
            <person name="Diard M."/>
            <person name="Dossat C."/>
            <person name="Karoui M.E."/>
            <person name="Frapy E."/>
            <person name="Garry L."/>
            <person name="Ghigo J.M."/>
            <person name="Gilles A.M."/>
            <person name="Johnson J."/>
            <person name="Le Bouguenec C."/>
            <person name="Lescat M."/>
            <person name="Mangenot S."/>
            <person name="Martinez-Jehanne V."/>
            <person name="Matic I."/>
            <person name="Nassif X."/>
            <person name="Oztas S."/>
            <person name="Petit M.A."/>
            <person name="Pichon C."/>
            <person name="Rouy Z."/>
            <person name="Ruf C.S."/>
            <person name="Schneider D."/>
            <person name="Tourret J."/>
            <person name="Vacherie B."/>
            <person name="Vallenet D."/>
            <person name="Medigue C."/>
            <person name="Rocha E.P.C."/>
            <person name="Denamur E."/>
        </authorList>
    </citation>
    <scope>NUCLEOTIDE SEQUENCE [LARGE SCALE GENOMIC DNA]</scope>
    <source>
        <strain>IAI1</strain>
    </source>
</reference>
<dbReference type="EC" id="4.2.1.80" evidence="1"/>
<dbReference type="EMBL" id="CU928160">
    <property type="protein sequence ID" value="CAQ97225.1"/>
    <property type="molecule type" value="Genomic_DNA"/>
</dbReference>
<dbReference type="RefSeq" id="WP_000160747.1">
    <property type="nucleotide sequence ID" value="NC_011741.1"/>
</dbReference>
<dbReference type="SMR" id="B7M2Z8"/>
<dbReference type="KEGG" id="ecr:ECIAI1_0351"/>
<dbReference type="HOGENOM" id="CLU_060136_4_1_6"/>
<dbReference type="UniPathway" id="UPA00714"/>
<dbReference type="GO" id="GO:0005737">
    <property type="term" value="C:cytoplasm"/>
    <property type="evidence" value="ECO:0007669"/>
    <property type="project" value="TreeGrafter"/>
</dbReference>
<dbReference type="GO" id="GO:0008684">
    <property type="term" value="F:2-oxopent-4-enoate hydratase activity"/>
    <property type="evidence" value="ECO:0007669"/>
    <property type="project" value="UniProtKB-UniRule"/>
</dbReference>
<dbReference type="GO" id="GO:0030145">
    <property type="term" value="F:manganese ion binding"/>
    <property type="evidence" value="ECO:0007669"/>
    <property type="project" value="InterPro"/>
</dbReference>
<dbReference type="GO" id="GO:0019380">
    <property type="term" value="P:3-phenylpropionate catabolic process"/>
    <property type="evidence" value="ECO:0007669"/>
    <property type="project" value="UniProtKB-UniRule"/>
</dbReference>
<dbReference type="FunFam" id="3.90.850.10:FF:000006">
    <property type="entry name" value="2-keto-4-pentenoate hydratase"/>
    <property type="match status" value="1"/>
</dbReference>
<dbReference type="Gene3D" id="3.90.850.10">
    <property type="entry name" value="Fumarylacetoacetase-like, C-terminal domain"/>
    <property type="match status" value="1"/>
</dbReference>
<dbReference type="HAMAP" id="MF_01655">
    <property type="entry name" value="MhpD"/>
    <property type="match status" value="1"/>
</dbReference>
<dbReference type="InterPro" id="IPR011234">
    <property type="entry name" value="Fumarylacetoacetase-like_C"/>
</dbReference>
<dbReference type="InterPro" id="IPR036663">
    <property type="entry name" value="Fumarylacetoacetase_C_sf"/>
</dbReference>
<dbReference type="InterPro" id="IPR050772">
    <property type="entry name" value="Hydratase-Decarb/MhpD_sf"/>
</dbReference>
<dbReference type="InterPro" id="IPR023793">
    <property type="entry name" value="Keto_pentenoate-hydratase"/>
</dbReference>
<dbReference type="NCBIfam" id="NF008461">
    <property type="entry name" value="PRK11342.1"/>
    <property type="match status" value="1"/>
</dbReference>
<dbReference type="PANTHER" id="PTHR30143:SF0">
    <property type="entry name" value="2-KETO-4-PENTENOATE HYDRATASE"/>
    <property type="match status" value="1"/>
</dbReference>
<dbReference type="PANTHER" id="PTHR30143">
    <property type="entry name" value="ACID HYDRATASE"/>
    <property type="match status" value="1"/>
</dbReference>
<dbReference type="Pfam" id="PF01557">
    <property type="entry name" value="FAA_hydrolase"/>
    <property type="match status" value="1"/>
</dbReference>
<dbReference type="SUPFAM" id="SSF56529">
    <property type="entry name" value="FAH"/>
    <property type="match status" value="1"/>
</dbReference>
<evidence type="ECO:0000255" key="1">
    <source>
        <dbReference type="HAMAP-Rule" id="MF_01655"/>
    </source>
</evidence>
<protein>
    <recommendedName>
        <fullName evidence="1">2-keto-4-pentenoate hydratase</fullName>
        <ecNumber evidence="1">4.2.1.80</ecNumber>
    </recommendedName>
    <alternativeName>
        <fullName evidence="1">2-hydroxypentadienoic acid hydratase</fullName>
    </alternativeName>
</protein>
<sequence>MTKHTLEQLAADLRRAAEQGEAIAPLRDLLGIDNAEAAYAIQHINVQYDVVQGRRVVGRKVGLTHPKVQQQLGVDQPDFGTLFADMCYGDNEIIPFSRVLQARIEAEIALVLNRDLPATDITFDELYNAIEWVLPALEVVGSRIRDWSIQFVDTVADNASCGVYVIGGPAQRPAGLDLKNCAMKMTRNNEEVSSGRGSECLGHPLNAAVWLARKMASLGEPLRAGDIILTGALGPMVAVNAGDRFEAHIEGIGSVAATFSSAAPKGSLS</sequence>
<accession>B7M2Z8</accession>
<feature type="chain" id="PRO_1000187024" description="2-keto-4-pentenoate hydratase">
    <location>
        <begin position="1"/>
        <end position="269"/>
    </location>
</feature>
<proteinExistence type="inferred from homology"/>